<reference key="1">
    <citation type="journal article" date="2001" name="J. Bacteriol.">
        <title>Infrequent genetic exchange and recombination in the mitochondrial genome of Candida albicans.</title>
        <authorList>
            <person name="Anderson J.B."/>
            <person name="Wickens C."/>
            <person name="Khan M."/>
            <person name="Cowen L.E."/>
            <person name="Federspiel N.A."/>
            <person name="Jones T."/>
            <person name="Kohn L.M."/>
        </authorList>
    </citation>
    <scope>NUCLEOTIDE SEQUENCE [LARGE SCALE GENOMIC DNA]</scope>
    <source>
        <strain>SC5314 / ATCC MYA-2876</strain>
    </source>
</reference>
<evidence type="ECO:0000250" key="1"/>
<evidence type="ECO:0000255" key="2"/>
<evidence type="ECO:0000305" key="3"/>
<evidence type="ECO:0000312" key="4">
    <source>
        <dbReference type="CGD" id="CAL0000188938"/>
    </source>
</evidence>
<geneLocation type="mitochondrion"/>
<dbReference type="EC" id="7.1.1.2"/>
<dbReference type="EMBL" id="AF285261">
    <property type="protein sequence ID" value="AAG59588.2"/>
    <property type="molecule type" value="Genomic_DNA"/>
</dbReference>
<dbReference type="RefSeq" id="NP_075031.2">
    <property type="nucleotide sequence ID" value="NC_002653.1"/>
</dbReference>
<dbReference type="SMR" id="Q9B8D7"/>
<dbReference type="STRING" id="237561.Q9B8D7"/>
<dbReference type="EnsemblFungi" id="CM_00050W-T">
    <property type="protein sequence ID" value="CM_00050W-T-p1"/>
    <property type="gene ID" value="CM_00050W"/>
</dbReference>
<dbReference type="GeneID" id="802566"/>
<dbReference type="KEGG" id="cal:CaalfMp02"/>
<dbReference type="CGD" id="CAL0000188938">
    <property type="gene designation" value="NAD6"/>
</dbReference>
<dbReference type="VEuPathDB" id="FungiDB:CM_00050W"/>
<dbReference type="InParanoid" id="Q9B8D7"/>
<dbReference type="Proteomes" id="UP000000559">
    <property type="component" value="Mitochondrion"/>
</dbReference>
<dbReference type="GO" id="GO:0031966">
    <property type="term" value="C:mitochondrial membrane"/>
    <property type="evidence" value="ECO:0007669"/>
    <property type="project" value="UniProtKB-SubCell"/>
</dbReference>
<dbReference type="GO" id="GO:0045271">
    <property type="term" value="C:respiratory chain complex I"/>
    <property type="evidence" value="ECO:0000250"/>
    <property type="project" value="CGD"/>
</dbReference>
<dbReference type="GO" id="GO:0008137">
    <property type="term" value="F:NADH dehydrogenase (ubiquinone) activity"/>
    <property type="evidence" value="ECO:0000250"/>
    <property type="project" value="CGD"/>
</dbReference>
<dbReference type="GO" id="GO:0006120">
    <property type="term" value="P:mitochondrial electron transport, NADH to ubiquinone"/>
    <property type="evidence" value="ECO:0000250"/>
    <property type="project" value="CGD"/>
</dbReference>
<dbReference type="Gene3D" id="1.20.120.1200">
    <property type="entry name" value="NADH-ubiquinone/plastoquinone oxidoreductase chain 6, subunit NuoJ"/>
    <property type="match status" value="1"/>
</dbReference>
<dbReference type="InterPro" id="IPR001457">
    <property type="entry name" value="NADH_UbQ/plastoQ_OxRdtase_su6"/>
</dbReference>
<dbReference type="InterPro" id="IPR042106">
    <property type="entry name" value="Nuo/plastoQ_OxRdtase_6_NuoJ"/>
</dbReference>
<dbReference type="PANTHER" id="PTHR33269">
    <property type="entry name" value="NADH-UBIQUINONE OXIDOREDUCTASE CHAIN 6"/>
    <property type="match status" value="1"/>
</dbReference>
<dbReference type="PANTHER" id="PTHR33269:SF17">
    <property type="entry name" value="NADH-UBIQUINONE OXIDOREDUCTASE CHAIN 6"/>
    <property type="match status" value="1"/>
</dbReference>
<dbReference type="Pfam" id="PF00499">
    <property type="entry name" value="Oxidored_q3"/>
    <property type="match status" value="1"/>
</dbReference>
<keyword id="KW-0249">Electron transport</keyword>
<keyword id="KW-0472">Membrane</keyword>
<keyword id="KW-0496">Mitochondrion</keyword>
<keyword id="KW-0520">NAD</keyword>
<keyword id="KW-1185">Reference proteome</keyword>
<keyword id="KW-0679">Respiratory chain</keyword>
<keyword id="KW-1278">Translocase</keyword>
<keyword id="KW-0812">Transmembrane</keyword>
<keyword id="KW-1133">Transmembrane helix</keyword>
<keyword id="KW-0813">Transport</keyword>
<keyword id="KW-0830">Ubiquinone</keyword>
<organism>
    <name type="scientific">Candida albicans (strain SC5314 / ATCC MYA-2876)</name>
    <name type="common">Yeast</name>
    <dbReference type="NCBI Taxonomy" id="237561"/>
    <lineage>
        <taxon>Eukaryota</taxon>
        <taxon>Fungi</taxon>
        <taxon>Dikarya</taxon>
        <taxon>Ascomycota</taxon>
        <taxon>Saccharomycotina</taxon>
        <taxon>Pichiomycetes</taxon>
        <taxon>Debaryomycetaceae</taxon>
        <taxon>Candida/Lodderomyces clade</taxon>
        <taxon>Candida</taxon>
    </lineage>
</organism>
<proteinExistence type="inferred from homology"/>
<comment type="function">
    <text evidence="1">Core subunit of the mitochondrial membrane respiratory chain NADH dehydrogenase (Complex I) that is believed to belong to the minimal assembly required for catalysis. Complex I functions in the transfer of electrons from NADH to the respiratory chain. The immediate electron acceptor for the enzyme is believed to be ubiquinone (By similarity).</text>
</comment>
<comment type="catalytic activity">
    <reaction>
        <text>a ubiquinone + NADH + 5 H(+)(in) = a ubiquinol + NAD(+) + 4 H(+)(out)</text>
        <dbReference type="Rhea" id="RHEA:29091"/>
        <dbReference type="Rhea" id="RHEA-COMP:9565"/>
        <dbReference type="Rhea" id="RHEA-COMP:9566"/>
        <dbReference type="ChEBI" id="CHEBI:15378"/>
        <dbReference type="ChEBI" id="CHEBI:16389"/>
        <dbReference type="ChEBI" id="CHEBI:17976"/>
        <dbReference type="ChEBI" id="CHEBI:57540"/>
        <dbReference type="ChEBI" id="CHEBI:57945"/>
        <dbReference type="EC" id="7.1.1.2"/>
    </reaction>
</comment>
<comment type="subcellular location">
    <subcellularLocation>
        <location evidence="3">Mitochondrion membrane</location>
        <topology evidence="3">Multi-pass membrane protein</topology>
    </subcellularLocation>
</comment>
<comment type="similarity">
    <text evidence="3">Belongs to the complex I subunit 6 family.</text>
</comment>
<feature type="chain" id="PRO_0000356880" description="NADH-ubiquinone oxidoreductase chain 6">
    <location>
        <begin position="1"/>
        <end position="146"/>
    </location>
</feature>
<feature type="transmembrane region" description="Helical" evidence="2">
    <location>
        <begin position="10"/>
        <end position="30"/>
    </location>
</feature>
<feature type="transmembrane region" description="Helical" evidence="2">
    <location>
        <begin position="43"/>
        <end position="63"/>
    </location>
</feature>
<feature type="transmembrane region" description="Helical" evidence="2">
    <location>
        <begin position="81"/>
        <end position="101"/>
    </location>
</feature>
<feature type="transmembrane region" description="Helical" evidence="2">
    <location>
        <begin position="124"/>
        <end position="144"/>
    </location>
</feature>
<accession>Q9B8D7</accession>
<gene>
    <name type="primary">NAD6</name>
    <name evidence="4" type="ordered locus">CM_00050W</name>
    <name type="ORF">CaalfMp02</name>
</gene>
<sequence>MSLISGIASILAIGLLSPVQSILALILLFVTVAINLYTSGYVLMGILYILVYVGAIAILFLFILSLLNIEYKPTGGMHPLVIVLILIPLIPLDIAFEPIAIVESVSTTYNELSIVGTLFYSEYAPMLVIIGIILIVSVIGAIAMTR</sequence>
<protein>
    <recommendedName>
        <fullName>NADH-ubiquinone oxidoreductase chain 6</fullName>
        <ecNumber>7.1.1.2</ecNumber>
    </recommendedName>
    <alternativeName>
        <fullName>NADH dehydrogenase subunit 6</fullName>
    </alternativeName>
</protein>
<name>NU6M_CANAL</name>